<accession>Q8LPK2</accession>
<accession>O04711</accession>
<accession>Q0WUR0</accession>
<feature type="signal peptide" evidence="1">
    <location>
        <begin position="1"/>
        <end position="30"/>
    </location>
</feature>
<feature type="chain" id="PRO_0000227913" description="ABC transporter B family member 2">
    <location>
        <begin position="31"/>
        <end position="1273"/>
    </location>
</feature>
<feature type="transmembrane region" description="Helical" evidence="3">
    <location>
        <begin position="66"/>
        <end position="86"/>
    </location>
</feature>
<feature type="transmembrane region" description="Helical" evidence="3">
    <location>
        <begin position="91"/>
        <end position="111"/>
    </location>
</feature>
<feature type="transmembrane region" description="Helical" evidence="3">
    <location>
        <begin position="126"/>
        <end position="146"/>
    </location>
</feature>
<feature type="transmembrane region" description="Helical" evidence="3">
    <location>
        <begin position="209"/>
        <end position="229"/>
    </location>
</feature>
<feature type="transmembrane region" description="Helical" evidence="3">
    <location>
        <begin position="230"/>
        <end position="250"/>
    </location>
</feature>
<feature type="transmembrane region" description="Helical" evidence="3">
    <location>
        <begin position="305"/>
        <end position="325"/>
    </location>
</feature>
<feature type="transmembrane region" description="Helical" evidence="3">
    <location>
        <begin position="345"/>
        <end position="365"/>
    </location>
</feature>
<feature type="transmembrane region" description="Helical" evidence="3">
    <location>
        <begin position="711"/>
        <end position="731"/>
    </location>
</feature>
<feature type="transmembrane region" description="Helical" evidence="3">
    <location>
        <begin position="752"/>
        <end position="772"/>
    </location>
</feature>
<feature type="transmembrane region" description="Helical" evidence="3">
    <location>
        <begin position="832"/>
        <end position="852"/>
    </location>
</feature>
<feature type="transmembrane region" description="Helical" evidence="3">
    <location>
        <begin position="934"/>
        <end position="954"/>
    </location>
</feature>
<feature type="transmembrane region" description="Helical" evidence="3">
    <location>
        <begin position="975"/>
        <end position="995"/>
    </location>
</feature>
<feature type="domain" description="ABC transmembrane type-1 1" evidence="3">
    <location>
        <begin position="77"/>
        <end position="366"/>
    </location>
</feature>
<feature type="domain" description="ABC transporter 1" evidence="2">
    <location>
        <begin position="401"/>
        <end position="637"/>
    </location>
</feature>
<feature type="domain" description="ABC transmembrane type-1 2" evidence="3">
    <location>
        <begin position="710"/>
        <end position="997"/>
    </location>
</feature>
<feature type="domain" description="ABC transporter 2" evidence="2">
    <location>
        <begin position="1030"/>
        <end position="1266"/>
    </location>
</feature>
<feature type="binding site" evidence="2">
    <location>
        <begin position="436"/>
        <end position="443"/>
    </location>
    <ligand>
        <name>ATP</name>
        <dbReference type="ChEBI" id="CHEBI:30616"/>
        <label>1</label>
    </ligand>
</feature>
<feature type="binding site" evidence="2">
    <location>
        <begin position="1065"/>
        <end position="1072"/>
    </location>
    <ligand>
        <name>ATP</name>
        <dbReference type="ChEBI" id="CHEBI:30616"/>
        <label>2</label>
    </ligand>
</feature>
<feature type="glycosylation site" description="N-linked (GlcNAc...) asparagine" evidence="1">
    <location>
        <position position="466"/>
    </location>
</feature>
<feature type="glycosylation site" description="N-linked (GlcNAc...) asparagine" evidence="1">
    <location>
        <position position="651"/>
    </location>
</feature>
<feature type="glycosylation site" description="N-linked (GlcNAc...) asparagine" evidence="1">
    <location>
        <position position="806"/>
    </location>
</feature>
<feature type="glycosylation site" description="N-linked (GlcNAc...) asparagine" evidence="1">
    <location>
        <position position="1217"/>
    </location>
</feature>
<feature type="glycosylation site" description="N-linked (GlcNAc...) asparagine" evidence="1">
    <location>
        <position position="1256"/>
    </location>
</feature>
<feature type="sequence conflict" description="In Ref. 5; AAM20507." evidence="5" ref="5">
    <original>T</original>
    <variation>A</variation>
    <location>
        <position position="807"/>
    </location>
</feature>
<proteinExistence type="evidence at protein level"/>
<evidence type="ECO:0000255" key="1"/>
<evidence type="ECO:0000255" key="2">
    <source>
        <dbReference type="PROSITE-ProRule" id="PRU00434"/>
    </source>
</evidence>
<evidence type="ECO:0000255" key="3">
    <source>
        <dbReference type="PROSITE-ProRule" id="PRU00441"/>
    </source>
</evidence>
<evidence type="ECO:0000269" key="4">
    <source>
    </source>
</evidence>
<evidence type="ECO:0000305" key="5"/>
<gene>
    <name type="primary">ABCB2</name>
    <name type="synonym">MDR2</name>
    <name type="synonym">PGP2</name>
    <name type="ordered locus">At4g25960</name>
    <name type="ORF">F20B18.70</name>
</gene>
<comment type="subunit">
    <text evidence="4">Interacts with 1-naphthylphthalamic acid (NPA).</text>
</comment>
<comment type="subcellular location">
    <subcellularLocation>
        <location evidence="3">Membrane</location>
        <topology evidence="3">Multi-pass membrane protein</topology>
    </subcellularLocation>
</comment>
<comment type="similarity">
    <text evidence="5">Belongs to the ABC transporter superfamily. ABCB family. Multidrug resistance exporter (TC 3.A.1.201) subfamily.</text>
</comment>
<comment type="sequence caution" evidence="5">
    <conflict type="erroneous initiation">
        <sequence resource="EMBL-CDS" id="AAM20507"/>
    </conflict>
    <text>Truncated N-terminus.</text>
</comment>
<comment type="sequence caution" evidence="5">
    <conflict type="erroneous initiation">
        <sequence resource="EMBL-CDS" id="CAA71276"/>
    </conflict>
    <text>Truncated N-terminus.</text>
</comment>
<comment type="sequence caution" evidence="5">
    <conflict type="erroneous initiation">
        <sequence resource="EMBL-CDS" id="CAB39661"/>
    </conflict>
    <text>Truncated N-terminus.</text>
</comment>
<comment type="sequence caution" evidence="5">
    <conflict type="erroneous initiation">
        <sequence resource="EMBL-CDS" id="CAB79451"/>
    </conflict>
    <text>Truncated N-terminus.</text>
</comment>
<sequence length="1273" mass="139909">MYISLIFFLSNHFPPLISIPIFIFLSFSSPTNYTHLKLKKMQPSGDPAPEKEKEMTQPKVSLLKLFSFADFYDCVLMTLGSVGACIHGASVPIFFIFFGKLINIIGLAYLFPKQASHRVAKYSLDFVYLSVAILFSSWLEVACWMHTGERQAAKMRRAYLRSMLSQDISLFDTEASTGEVISAITSDILVVQDALSEKVGNFLHYISRFIAGFAIGFTSVWQISLVTLSIVPLIALAGGIYAFVAIGLIARVRKSYIKAGEIAEEVIGNVRTVQAFTGEERAVRLYREALENTYKYGRKAGLTKGLGLGSMHCVLFLSWALLVWFTSVVVHKDIADGGKSFTTMLNVVIAGLSLGQAAPDISAFVRAKAAAYPIFKMIERNTVTKTSAKSGRKLGKVDGHIQFKDATFSYPSRPDVVIFDRLNLAIPAGKIVALVGGSGSGKSTVISLIERFYEPISGAVLLDGNNISELDIKWLRGQIGLVNQEPALFATTIRENILYGKDDATAEEITRAAKLSEAISFINNLPEGFETQVGERGIQLSGGQKQRIAISRAIVKNPSILLLDEATSALDAESEKSVQEALDRVMVGRTTVVVAHRLSTVRNADIIAVVHEGKIVEFGNHENLISNPDGAYSSLLRLQETASLQRNPSLNRTLSRPHSIKYSRELSRTRSSFCSERESVTRPDGADPSKKVKVTVGRLYSMIRPDWMYGVCGTICAFIAGSQMPLFALGVSQALVSYYSGWDETQKEIKKIAILFCCASVITLIVYTIEHICFGTMGERLTLRVRENMFRAILKNEIGWFDEVDNTSSMLASRLESDATLLKTIVVDRSTILLQNLGLVVTSFIIAFILNWRLTLVVLATYPLVISGHISEKLFMQGYGGDLNKAYLKANMLAGESVSNIRTVAAFCAEEKILELYSRELLEPSKSSFRRGQIAGLFYGVSQFFIFSSYGLALWYGSTLMDKGLAGFKSVMKTFMVLIVTALAMGETLALAPDLLKGNQMVASVFEILDRKTQIVGETSEELNNVEGTIELKGVHFSYPSRPDVVIFRDFDLIVRAGKSMALVGQSGSGKSSVISLILRFYDPTAGKVMIEGKDIKKLDLKALRKHIGLVQQEPALFATTIYENILYGNEGASQSEVVESAMLANAHSFITSLPEGYSTKVGERGVQMSGGQRQRIAIARAILKNPAILLLDEATSALDVESERVVQQALDRLMANRTTVVVAHRLSTIKNADTISVLHGGKIVEQGSHRKLVLNKSGPYFKLISLQQQQQP</sequence>
<dbReference type="EMBL" id="Y10227">
    <property type="protein sequence ID" value="CAA71276.1"/>
    <property type="status" value="ALT_INIT"/>
    <property type="molecule type" value="Genomic_DNA"/>
</dbReference>
<dbReference type="EMBL" id="Y10228">
    <property type="protein sequence ID" value="CAA71277.1"/>
    <property type="molecule type" value="mRNA"/>
</dbReference>
<dbReference type="EMBL" id="AL049483">
    <property type="protein sequence ID" value="CAB39661.1"/>
    <property type="status" value="ALT_INIT"/>
    <property type="molecule type" value="Genomic_DNA"/>
</dbReference>
<dbReference type="EMBL" id="AL161564">
    <property type="protein sequence ID" value="CAB79451.1"/>
    <property type="status" value="ALT_INIT"/>
    <property type="molecule type" value="Genomic_DNA"/>
</dbReference>
<dbReference type="EMBL" id="CP002687">
    <property type="protein sequence ID" value="AEE85137.1"/>
    <property type="molecule type" value="Genomic_DNA"/>
</dbReference>
<dbReference type="EMBL" id="AK227086">
    <property type="protein sequence ID" value="BAE99138.1"/>
    <property type="molecule type" value="mRNA"/>
</dbReference>
<dbReference type="EMBL" id="AY099656">
    <property type="protein sequence ID" value="AAM20507.1"/>
    <property type="status" value="ALT_INIT"/>
    <property type="molecule type" value="mRNA"/>
</dbReference>
<dbReference type="PIR" id="T04251">
    <property type="entry name" value="T04251"/>
</dbReference>
<dbReference type="RefSeq" id="NP_194326.2">
    <property type="nucleotide sequence ID" value="NM_118729.4"/>
</dbReference>
<dbReference type="SMR" id="Q8LPK2"/>
<dbReference type="BioGRID" id="13989">
    <property type="interactions" value="1"/>
</dbReference>
<dbReference type="FunCoup" id="Q8LPK2">
    <property type="interactions" value="290"/>
</dbReference>
<dbReference type="STRING" id="3702.Q8LPK2"/>
<dbReference type="GlyCosmos" id="Q8LPK2">
    <property type="glycosylation" value="5 sites, No reported glycans"/>
</dbReference>
<dbReference type="GlyGen" id="Q8LPK2">
    <property type="glycosylation" value="5 sites"/>
</dbReference>
<dbReference type="iPTMnet" id="Q8LPK2"/>
<dbReference type="PaxDb" id="3702-AT4G25960.1"/>
<dbReference type="ProteomicsDB" id="245127"/>
<dbReference type="EnsemblPlants" id="AT4G25960.1">
    <property type="protein sequence ID" value="AT4G25960.1"/>
    <property type="gene ID" value="AT4G25960"/>
</dbReference>
<dbReference type="GeneID" id="828702"/>
<dbReference type="Gramene" id="AT4G25960.1">
    <property type="protein sequence ID" value="AT4G25960.1"/>
    <property type="gene ID" value="AT4G25960"/>
</dbReference>
<dbReference type="KEGG" id="ath:AT4G25960"/>
<dbReference type="Araport" id="AT4G25960"/>
<dbReference type="TAIR" id="AT4G25960">
    <property type="gene designation" value="ABCB2"/>
</dbReference>
<dbReference type="eggNOG" id="KOG0055">
    <property type="taxonomic scope" value="Eukaryota"/>
</dbReference>
<dbReference type="HOGENOM" id="CLU_000604_17_2_1"/>
<dbReference type="InParanoid" id="Q8LPK2"/>
<dbReference type="OMA" id="QDYWLRW"/>
<dbReference type="BioCyc" id="ARA:AT4G25960-MONOMER"/>
<dbReference type="PRO" id="PR:Q8LPK2"/>
<dbReference type="Proteomes" id="UP000006548">
    <property type="component" value="Chromosome 4"/>
</dbReference>
<dbReference type="ExpressionAtlas" id="Q8LPK2">
    <property type="expression patterns" value="baseline and differential"/>
</dbReference>
<dbReference type="GO" id="GO:0005829">
    <property type="term" value="C:cytosol"/>
    <property type="evidence" value="ECO:0007005"/>
    <property type="project" value="TAIR"/>
</dbReference>
<dbReference type="GO" id="GO:0016020">
    <property type="term" value="C:membrane"/>
    <property type="evidence" value="ECO:0007669"/>
    <property type="project" value="UniProtKB-SubCell"/>
</dbReference>
<dbReference type="GO" id="GO:0140359">
    <property type="term" value="F:ABC-type transporter activity"/>
    <property type="evidence" value="ECO:0007669"/>
    <property type="project" value="InterPro"/>
</dbReference>
<dbReference type="GO" id="GO:0005524">
    <property type="term" value="F:ATP binding"/>
    <property type="evidence" value="ECO:0007669"/>
    <property type="project" value="UniProtKB-KW"/>
</dbReference>
<dbReference type="GO" id="GO:0016887">
    <property type="term" value="F:ATP hydrolysis activity"/>
    <property type="evidence" value="ECO:0007669"/>
    <property type="project" value="InterPro"/>
</dbReference>
<dbReference type="CDD" id="cd18577">
    <property type="entry name" value="ABC_6TM_Pgp_ABCB1_D1_like"/>
    <property type="match status" value="1"/>
</dbReference>
<dbReference type="CDD" id="cd18578">
    <property type="entry name" value="ABC_6TM_Pgp_ABCB1_D2_like"/>
    <property type="match status" value="1"/>
</dbReference>
<dbReference type="CDD" id="cd03249">
    <property type="entry name" value="ABC_MTABC3_MDL1_MDL2"/>
    <property type="match status" value="2"/>
</dbReference>
<dbReference type="FunFam" id="3.40.50.300:FF:000066">
    <property type="entry name" value="ABC transporter B family member 1"/>
    <property type="match status" value="1"/>
</dbReference>
<dbReference type="FunFam" id="3.40.50.300:FF:000205">
    <property type="entry name" value="ABC transporter B family member 4"/>
    <property type="match status" value="1"/>
</dbReference>
<dbReference type="Gene3D" id="1.20.1560.10">
    <property type="entry name" value="ABC transporter type 1, transmembrane domain"/>
    <property type="match status" value="1"/>
</dbReference>
<dbReference type="Gene3D" id="3.40.50.300">
    <property type="entry name" value="P-loop containing nucleotide triphosphate hydrolases"/>
    <property type="match status" value="2"/>
</dbReference>
<dbReference type="InterPro" id="IPR003593">
    <property type="entry name" value="AAA+_ATPase"/>
</dbReference>
<dbReference type="InterPro" id="IPR011527">
    <property type="entry name" value="ABC1_TM_dom"/>
</dbReference>
<dbReference type="InterPro" id="IPR036640">
    <property type="entry name" value="ABC1_TM_sf"/>
</dbReference>
<dbReference type="InterPro" id="IPR003439">
    <property type="entry name" value="ABC_transporter-like_ATP-bd"/>
</dbReference>
<dbReference type="InterPro" id="IPR017871">
    <property type="entry name" value="ABC_transporter-like_CS"/>
</dbReference>
<dbReference type="InterPro" id="IPR027417">
    <property type="entry name" value="P-loop_NTPase"/>
</dbReference>
<dbReference type="InterPro" id="IPR039421">
    <property type="entry name" value="Type_1_exporter"/>
</dbReference>
<dbReference type="PANTHER" id="PTHR24222">
    <property type="entry name" value="ABC TRANSPORTER B FAMILY"/>
    <property type="match status" value="1"/>
</dbReference>
<dbReference type="PANTHER" id="PTHR24222:SF62">
    <property type="entry name" value="ABC TRANSPORTER B FAMILY MEMBER 2"/>
    <property type="match status" value="1"/>
</dbReference>
<dbReference type="Pfam" id="PF00664">
    <property type="entry name" value="ABC_membrane"/>
    <property type="match status" value="2"/>
</dbReference>
<dbReference type="Pfam" id="PF00005">
    <property type="entry name" value="ABC_tran"/>
    <property type="match status" value="2"/>
</dbReference>
<dbReference type="SMART" id="SM00382">
    <property type="entry name" value="AAA"/>
    <property type="match status" value="2"/>
</dbReference>
<dbReference type="SUPFAM" id="SSF90123">
    <property type="entry name" value="ABC transporter transmembrane region"/>
    <property type="match status" value="2"/>
</dbReference>
<dbReference type="SUPFAM" id="SSF52540">
    <property type="entry name" value="P-loop containing nucleoside triphosphate hydrolases"/>
    <property type="match status" value="2"/>
</dbReference>
<dbReference type="PROSITE" id="PS50929">
    <property type="entry name" value="ABC_TM1F"/>
    <property type="match status" value="2"/>
</dbReference>
<dbReference type="PROSITE" id="PS00211">
    <property type="entry name" value="ABC_TRANSPORTER_1"/>
    <property type="match status" value="2"/>
</dbReference>
<dbReference type="PROSITE" id="PS50893">
    <property type="entry name" value="ABC_TRANSPORTER_2"/>
    <property type="match status" value="2"/>
</dbReference>
<organism>
    <name type="scientific">Arabidopsis thaliana</name>
    <name type="common">Mouse-ear cress</name>
    <dbReference type="NCBI Taxonomy" id="3702"/>
    <lineage>
        <taxon>Eukaryota</taxon>
        <taxon>Viridiplantae</taxon>
        <taxon>Streptophyta</taxon>
        <taxon>Embryophyta</taxon>
        <taxon>Tracheophyta</taxon>
        <taxon>Spermatophyta</taxon>
        <taxon>Magnoliopsida</taxon>
        <taxon>eudicotyledons</taxon>
        <taxon>Gunneridae</taxon>
        <taxon>Pentapetalae</taxon>
        <taxon>rosids</taxon>
        <taxon>malvids</taxon>
        <taxon>Brassicales</taxon>
        <taxon>Brassicaceae</taxon>
        <taxon>Camelineae</taxon>
        <taxon>Arabidopsis</taxon>
    </lineage>
</organism>
<name>AB2B_ARATH</name>
<keyword id="KW-0067">ATP-binding</keyword>
<keyword id="KW-0903">Direct protein sequencing</keyword>
<keyword id="KW-0325">Glycoprotein</keyword>
<keyword id="KW-0472">Membrane</keyword>
<keyword id="KW-0547">Nucleotide-binding</keyword>
<keyword id="KW-1185">Reference proteome</keyword>
<keyword id="KW-0677">Repeat</keyword>
<keyword id="KW-0732">Signal</keyword>
<keyword id="KW-0812">Transmembrane</keyword>
<keyword id="KW-1133">Transmembrane helix</keyword>
<keyword id="KW-0813">Transport</keyword>
<protein>
    <recommendedName>
        <fullName>ABC transporter B family member 2</fullName>
        <shortName>ABC transporter ABCB.2</shortName>
        <shortName>AtABCB2</shortName>
    </recommendedName>
    <alternativeName>
        <fullName>Multidrug resistance protein 2</fullName>
    </alternativeName>
    <alternativeName>
        <fullName>P-glycoprotein 2</fullName>
    </alternativeName>
</protein>
<reference key="1">
    <citation type="submission" date="1996-12" db="EMBL/GenBank/DDBJ databases">
        <authorList>
            <person name="Marques J.P."/>
        </authorList>
    </citation>
    <scope>NUCLEOTIDE SEQUENCE [GENOMIC DNA]</scope>
    <scope>NUCLEOTIDE SEQUENCE [MRNA] OF 11-1273</scope>
    <source>
        <strain>cv. Columbia</strain>
    </source>
</reference>
<reference key="2">
    <citation type="journal article" date="1999" name="Nature">
        <title>Sequence and analysis of chromosome 4 of the plant Arabidopsis thaliana.</title>
        <authorList>
            <person name="Mayer K.F.X."/>
            <person name="Schueller C."/>
            <person name="Wambutt R."/>
            <person name="Murphy G."/>
            <person name="Volckaert G."/>
            <person name="Pohl T."/>
            <person name="Duesterhoeft A."/>
            <person name="Stiekema W."/>
            <person name="Entian K.-D."/>
            <person name="Terryn N."/>
            <person name="Harris B."/>
            <person name="Ansorge W."/>
            <person name="Brandt P."/>
            <person name="Grivell L.A."/>
            <person name="Rieger M."/>
            <person name="Weichselgartner M."/>
            <person name="de Simone V."/>
            <person name="Obermaier B."/>
            <person name="Mache R."/>
            <person name="Mueller M."/>
            <person name="Kreis M."/>
            <person name="Delseny M."/>
            <person name="Puigdomenech P."/>
            <person name="Watson M."/>
            <person name="Schmidtheini T."/>
            <person name="Reichert B."/>
            <person name="Portetelle D."/>
            <person name="Perez-Alonso M."/>
            <person name="Boutry M."/>
            <person name="Bancroft I."/>
            <person name="Vos P."/>
            <person name="Hoheisel J."/>
            <person name="Zimmermann W."/>
            <person name="Wedler H."/>
            <person name="Ridley P."/>
            <person name="Langham S.-A."/>
            <person name="McCullagh B."/>
            <person name="Bilham L."/>
            <person name="Robben J."/>
            <person name="van der Schueren J."/>
            <person name="Grymonprez B."/>
            <person name="Chuang Y.-J."/>
            <person name="Vandenbussche F."/>
            <person name="Braeken M."/>
            <person name="Weltjens I."/>
            <person name="Voet M."/>
            <person name="Bastiaens I."/>
            <person name="Aert R."/>
            <person name="Defoor E."/>
            <person name="Weitzenegger T."/>
            <person name="Bothe G."/>
            <person name="Ramsperger U."/>
            <person name="Hilbert H."/>
            <person name="Braun M."/>
            <person name="Holzer E."/>
            <person name="Brandt A."/>
            <person name="Peters S."/>
            <person name="van Staveren M."/>
            <person name="Dirkse W."/>
            <person name="Mooijman P."/>
            <person name="Klein Lankhorst R."/>
            <person name="Rose M."/>
            <person name="Hauf J."/>
            <person name="Koetter P."/>
            <person name="Berneiser S."/>
            <person name="Hempel S."/>
            <person name="Feldpausch M."/>
            <person name="Lamberth S."/>
            <person name="Van den Daele H."/>
            <person name="De Keyser A."/>
            <person name="Buysshaert C."/>
            <person name="Gielen J."/>
            <person name="Villarroel R."/>
            <person name="De Clercq R."/>
            <person name="van Montagu M."/>
            <person name="Rogers J."/>
            <person name="Cronin A."/>
            <person name="Quail M.A."/>
            <person name="Bray-Allen S."/>
            <person name="Clark L."/>
            <person name="Doggett J."/>
            <person name="Hall S."/>
            <person name="Kay M."/>
            <person name="Lennard N."/>
            <person name="McLay K."/>
            <person name="Mayes R."/>
            <person name="Pettett A."/>
            <person name="Rajandream M.A."/>
            <person name="Lyne M."/>
            <person name="Benes V."/>
            <person name="Rechmann S."/>
            <person name="Borkova D."/>
            <person name="Bloecker H."/>
            <person name="Scharfe M."/>
            <person name="Grimm M."/>
            <person name="Loehnert T.-H."/>
            <person name="Dose S."/>
            <person name="de Haan M."/>
            <person name="Maarse A.C."/>
            <person name="Schaefer M."/>
            <person name="Mueller-Auer S."/>
            <person name="Gabel C."/>
            <person name="Fuchs M."/>
            <person name="Fartmann B."/>
            <person name="Granderath K."/>
            <person name="Dauner D."/>
            <person name="Herzl A."/>
            <person name="Neumann S."/>
            <person name="Argiriou A."/>
            <person name="Vitale D."/>
            <person name="Liguori R."/>
            <person name="Piravandi E."/>
            <person name="Massenet O."/>
            <person name="Quigley F."/>
            <person name="Clabauld G."/>
            <person name="Muendlein A."/>
            <person name="Felber R."/>
            <person name="Schnabl S."/>
            <person name="Hiller R."/>
            <person name="Schmidt W."/>
            <person name="Lecharny A."/>
            <person name="Aubourg S."/>
            <person name="Chefdor F."/>
            <person name="Cooke R."/>
            <person name="Berger C."/>
            <person name="Monfort A."/>
            <person name="Casacuberta E."/>
            <person name="Gibbons T."/>
            <person name="Weber N."/>
            <person name="Vandenbol M."/>
            <person name="Bargues M."/>
            <person name="Terol J."/>
            <person name="Torres A."/>
            <person name="Perez-Perez A."/>
            <person name="Purnelle B."/>
            <person name="Bent E."/>
            <person name="Johnson S."/>
            <person name="Tacon D."/>
            <person name="Jesse T."/>
            <person name="Heijnen L."/>
            <person name="Schwarz S."/>
            <person name="Scholler P."/>
            <person name="Heber S."/>
            <person name="Francs P."/>
            <person name="Bielke C."/>
            <person name="Frishman D."/>
            <person name="Haase D."/>
            <person name="Lemcke K."/>
            <person name="Mewes H.-W."/>
            <person name="Stocker S."/>
            <person name="Zaccaria P."/>
            <person name="Bevan M."/>
            <person name="Wilson R.K."/>
            <person name="de la Bastide M."/>
            <person name="Habermann K."/>
            <person name="Parnell L."/>
            <person name="Dedhia N."/>
            <person name="Gnoj L."/>
            <person name="Schutz K."/>
            <person name="Huang E."/>
            <person name="Spiegel L."/>
            <person name="Sekhon M."/>
            <person name="Murray J."/>
            <person name="Sheet P."/>
            <person name="Cordes M."/>
            <person name="Abu-Threideh J."/>
            <person name="Stoneking T."/>
            <person name="Kalicki J."/>
            <person name="Graves T."/>
            <person name="Harmon G."/>
            <person name="Edwards J."/>
            <person name="Latreille P."/>
            <person name="Courtney L."/>
            <person name="Cloud J."/>
            <person name="Abbott A."/>
            <person name="Scott K."/>
            <person name="Johnson D."/>
            <person name="Minx P."/>
            <person name="Bentley D."/>
            <person name="Fulton B."/>
            <person name="Miller N."/>
            <person name="Greco T."/>
            <person name="Kemp K."/>
            <person name="Kramer J."/>
            <person name="Fulton L."/>
            <person name="Mardis E."/>
            <person name="Dante M."/>
            <person name="Pepin K."/>
            <person name="Hillier L.W."/>
            <person name="Nelson J."/>
            <person name="Spieth J."/>
            <person name="Ryan E."/>
            <person name="Andrews S."/>
            <person name="Geisel C."/>
            <person name="Layman D."/>
            <person name="Du H."/>
            <person name="Ali J."/>
            <person name="Berghoff A."/>
            <person name="Jones K."/>
            <person name="Drone K."/>
            <person name="Cotton M."/>
            <person name="Joshu C."/>
            <person name="Antonoiu B."/>
            <person name="Zidanic M."/>
            <person name="Strong C."/>
            <person name="Sun H."/>
            <person name="Lamar B."/>
            <person name="Yordan C."/>
            <person name="Ma P."/>
            <person name="Zhong J."/>
            <person name="Preston R."/>
            <person name="Vil D."/>
            <person name="Shekher M."/>
            <person name="Matero A."/>
            <person name="Shah R."/>
            <person name="Swaby I.K."/>
            <person name="O'Shaughnessy A."/>
            <person name="Rodriguez M."/>
            <person name="Hoffman J."/>
            <person name="Till S."/>
            <person name="Granat S."/>
            <person name="Shohdy N."/>
            <person name="Hasegawa A."/>
            <person name="Hameed A."/>
            <person name="Lodhi M."/>
            <person name="Johnson A."/>
            <person name="Chen E."/>
            <person name="Marra M.A."/>
            <person name="Martienssen R."/>
            <person name="McCombie W.R."/>
        </authorList>
    </citation>
    <scope>NUCLEOTIDE SEQUENCE [LARGE SCALE GENOMIC DNA]</scope>
    <source>
        <strain>cv. Columbia</strain>
    </source>
</reference>
<reference key="3">
    <citation type="journal article" date="2017" name="Plant J.">
        <title>Araport11: a complete reannotation of the Arabidopsis thaliana reference genome.</title>
        <authorList>
            <person name="Cheng C.Y."/>
            <person name="Krishnakumar V."/>
            <person name="Chan A.P."/>
            <person name="Thibaud-Nissen F."/>
            <person name="Schobel S."/>
            <person name="Town C.D."/>
        </authorList>
    </citation>
    <scope>GENOME REANNOTATION</scope>
    <source>
        <strain>cv. Columbia</strain>
    </source>
</reference>
<reference key="4">
    <citation type="submission" date="2006-07" db="EMBL/GenBank/DDBJ databases">
        <title>Large-scale analysis of RIKEN Arabidopsis full-length (RAFL) cDNAs.</title>
        <authorList>
            <person name="Totoki Y."/>
            <person name="Seki M."/>
            <person name="Ishida J."/>
            <person name="Nakajima M."/>
            <person name="Enju A."/>
            <person name="Kamiya A."/>
            <person name="Narusaka M."/>
            <person name="Shin-i T."/>
            <person name="Nakagawa M."/>
            <person name="Sakamoto N."/>
            <person name="Oishi K."/>
            <person name="Kohara Y."/>
            <person name="Kobayashi M."/>
            <person name="Toyoda A."/>
            <person name="Sakaki Y."/>
            <person name="Sakurai T."/>
            <person name="Iida K."/>
            <person name="Akiyama K."/>
            <person name="Satou M."/>
            <person name="Toyoda T."/>
            <person name="Konagaya A."/>
            <person name="Carninci P."/>
            <person name="Kawai J."/>
            <person name="Hayashizaki Y."/>
            <person name="Shinozaki K."/>
        </authorList>
    </citation>
    <scope>NUCLEOTIDE SEQUENCE [LARGE SCALE MRNA]</scope>
    <source>
        <strain>cv. Columbia</strain>
    </source>
</reference>
<reference key="5">
    <citation type="journal article" date="2003" name="Science">
        <title>Empirical analysis of transcriptional activity in the Arabidopsis genome.</title>
        <authorList>
            <person name="Yamada K."/>
            <person name="Lim J."/>
            <person name="Dale J.M."/>
            <person name="Chen H."/>
            <person name="Shinn P."/>
            <person name="Palm C.J."/>
            <person name="Southwick A.M."/>
            <person name="Wu H.C."/>
            <person name="Kim C.J."/>
            <person name="Nguyen M."/>
            <person name="Pham P.K."/>
            <person name="Cheuk R.F."/>
            <person name="Karlin-Newmann G."/>
            <person name="Liu S.X."/>
            <person name="Lam B."/>
            <person name="Sakano H."/>
            <person name="Wu T."/>
            <person name="Yu G."/>
            <person name="Miranda M."/>
            <person name="Quach H.L."/>
            <person name="Tripp M."/>
            <person name="Chang C.H."/>
            <person name="Lee J.M."/>
            <person name="Toriumi M.J."/>
            <person name="Chan M.M."/>
            <person name="Tang C.C."/>
            <person name="Onodera C.S."/>
            <person name="Deng J.M."/>
            <person name="Akiyama K."/>
            <person name="Ansari Y."/>
            <person name="Arakawa T."/>
            <person name="Banh J."/>
            <person name="Banno F."/>
            <person name="Bowser L."/>
            <person name="Brooks S.Y."/>
            <person name="Carninci P."/>
            <person name="Chao Q."/>
            <person name="Choy N."/>
            <person name="Enju A."/>
            <person name="Goldsmith A.D."/>
            <person name="Gurjal M."/>
            <person name="Hansen N.F."/>
            <person name="Hayashizaki Y."/>
            <person name="Johnson-Hopson C."/>
            <person name="Hsuan V.W."/>
            <person name="Iida K."/>
            <person name="Karnes M."/>
            <person name="Khan S."/>
            <person name="Koesema E."/>
            <person name="Ishida J."/>
            <person name="Jiang P.X."/>
            <person name="Jones T."/>
            <person name="Kawai J."/>
            <person name="Kamiya A."/>
            <person name="Meyers C."/>
            <person name="Nakajima M."/>
            <person name="Narusaka M."/>
            <person name="Seki M."/>
            <person name="Sakurai T."/>
            <person name="Satou M."/>
            <person name="Tamse R."/>
            <person name="Vaysberg M."/>
            <person name="Wallender E.K."/>
            <person name="Wong C."/>
            <person name="Yamamura Y."/>
            <person name="Yuan S."/>
            <person name="Shinozaki K."/>
            <person name="Davis R.W."/>
            <person name="Theologis A."/>
            <person name="Ecker J.R."/>
        </authorList>
    </citation>
    <scope>NUCLEOTIDE SEQUENCE [LARGE SCALE MRNA] OF 21-1273</scope>
    <source>
        <strain>cv. Columbia</strain>
    </source>
</reference>
<reference key="6">
    <citation type="journal article" date="2001" name="Plant Cell">
        <title>Multidrug resistance-like genes of Arabidopsis required for auxin transport and auxin-mediated development.</title>
        <authorList>
            <person name="Noh B."/>
            <person name="Murphy A.S."/>
            <person name="Spalding E.P."/>
        </authorList>
    </citation>
    <scope>PROTEIN SEQUENCE OF 64-73 AND 198-207</scope>
    <scope>INTERACTION WITH NPA</scope>
</reference>
<reference key="7">
    <citation type="journal article" date="2001" name="J. Biol. Chem.">
        <title>The Arabidopsis thaliana ABC protein superfamily, a complete inventory.</title>
        <authorList>
            <person name="Sanchez-Fernandez R."/>
            <person name="Davies T.G."/>
            <person name="Coleman J.O."/>
            <person name="Rea P.A."/>
        </authorList>
    </citation>
    <scope>GENE FAMILY</scope>
    <scope>NOMENCLATURE</scope>
</reference>
<reference key="8">
    <citation type="journal article" date="2008" name="Trends Plant Sci.">
        <title>Plant ABC proteins - a unified nomenclature and updated inventory.</title>
        <authorList>
            <person name="Verrier P.J."/>
            <person name="Bird D."/>
            <person name="Burla B."/>
            <person name="Dassa E."/>
            <person name="Forestier C."/>
            <person name="Geisler M."/>
            <person name="Klein M."/>
            <person name="Kolukisaoglu H.U."/>
            <person name="Lee Y."/>
            <person name="Martinoia E."/>
            <person name="Murphy A."/>
            <person name="Rea P.A."/>
            <person name="Samuels L."/>
            <person name="Schulz B."/>
            <person name="Spalding E.J."/>
            <person name="Yazaki K."/>
            <person name="Theodoulou F.L."/>
        </authorList>
    </citation>
    <scope>GENE FAMILY</scope>
    <scope>NOMENCLATURE</scope>
</reference>